<proteinExistence type="inferred from homology"/>
<sequence>MDANNTFDSDLIHAIFKHIWARRFRERERSDAIDATEAEVALGTTKKNRLASANANALKLSCELLKSFVSEAVQRAAIIAEAEGMEKIEATHLERILPQLLLDF</sequence>
<reference key="1">
    <citation type="journal article" date="2000" name="Nature">
        <title>Sequence and analysis of chromosome 1 of the plant Arabidopsis thaliana.</title>
        <authorList>
            <person name="Theologis A."/>
            <person name="Ecker J.R."/>
            <person name="Palm C.J."/>
            <person name="Federspiel N.A."/>
            <person name="Kaul S."/>
            <person name="White O."/>
            <person name="Alonso J."/>
            <person name="Altafi H."/>
            <person name="Araujo R."/>
            <person name="Bowman C.L."/>
            <person name="Brooks S.Y."/>
            <person name="Buehler E."/>
            <person name="Chan A."/>
            <person name="Chao Q."/>
            <person name="Chen H."/>
            <person name="Cheuk R.F."/>
            <person name="Chin C.W."/>
            <person name="Chung M.K."/>
            <person name="Conn L."/>
            <person name="Conway A.B."/>
            <person name="Conway A.R."/>
            <person name="Creasy T.H."/>
            <person name="Dewar K."/>
            <person name="Dunn P."/>
            <person name="Etgu P."/>
            <person name="Feldblyum T.V."/>
            <person name="Feng J.-D."/>
            <person name="Fong B."/>
            <person name="Fujii C.Y."/>
            <person name="Gill J.E."/>
            <person name="Goldsmith A.D."/>
            <person name="Haas B."/>
            <person name="Hansen N.F."/>
            <person name="Hughes B."/>
            <person name="Huizar L."/>
            <person name="Hunter J.L."/>
            <person name="Jenkins J."/>
            <person name="Johnson-Hopson C."/>
            <person name="Khan S."/>
            <person name="Khaykin E."/>
            <person name="Kim C.J."/>
            <person name="Koo H.L."/>
            <person name="Kremenetskaia I."/>
            <person name="Kurtz D.B."/>
            <person name="Kwan A."/>
            <person name="Lam B."/>
            <person name="Langin-Hooper S."/>
            <person name="Lee A."/>
            <person name="Lee J.M."/>
            <person name="Lenz C.A."/>
            <person name="Li J.H."/>
            <person name="Li Y.-P."/>
            <person name="Lin X."/>
            <person name="Liu S.X."/>
            <person name="Liu Z.A."/>
            <person name="Luros J.S."/>
            <person name="Maiti R."/>
            <person name="Marziali A."/>
            <person name="Militscher J."/>
            <person name="Miranda M."/>
            <person name="Nguyen M."/>
            <person name="Nierman W.C."/>
            <person name="Osborne B.I."/>
            <person name="Pai G."/>
            <person name="Peterson J."/>
            <person name="Pham P.K."/>
            <person name="Rizzo M."/>
            <person name="Rooney T."/>
            <person name="Rowley D."/>
            <person name="Sakano H."/>
            <person name="Salzberg S.L."/>
            <person name="Schwartz J.R."/>
            <person name="Shinn P."/>
            <person name="Southwick A.M."/>
            <person name="Sun H."/>
            <person name="Tallon L.J."/>
            <person name="Tambunga G."/>
            <person name="Toriumi M.J."/>
            <person name="Town C.D."/>
            <person name="Utterback T."/>
            <person name="Van Aken S."/>
            <person name="Vaysberg M."/>
            <person name="Vysotskaia V.S."/>
            <person name="Walker M."/>
            <person name="Wu D."/>
            <person name="Yu G."/>
            <person name="Fraser C.M."/>
            <person name="Venter J.C."/>
            <person name="Davis R.W."/>
        </authorList>
    </citation>
    <scope>NUCLEOTIDE SEQUENCE [LARGE SCALE GENOMIC DNA]</scope>
    <source>
        <strain>cv. Columbia</strain>
    </source>
</reference>
<reference key="2">
    <citation type="journal article" date="2017" name="Plant J.">
        <title>Araport11: a complete reannotation of the Arabidopsis thaliana reference genome.</title>
        <authorList>
            <person name="Cheng C.Y."/>
            <person name="Krishnakumar V."/>
            <person name="Chan A.P."/>
            <person name="Thibaud-Nissen F."/>
            <person name="Schobel S."/>
            <person name="Town C.D."/>
        </authorList>
    </citation>
    <scope>GENOME REANNOTATION</scope>
    <source>
        <strain>cv. Columbia</strain>
    </source>
</reference>
<reference key="3">
    <citation type="journal article" date="2003" name="Science">
        <title>Empirical analysis of transcriptional activity in the Arabidopsis genome.</title>
        <authorList>
            <person name="Yamada K."/>
            <person name="Lim J."/>
            <person name="Dale J.M."/>
            <person name="Chen H."/>
            <person name="Shinn P."/>
            <person name="Palm C.J."/>
            <person name="Southwick A.M."/>
            <person name="Wu H.C."/>
            <person name="Kim C.J."/>
            <person name="Nguyen M."/>
            <person name="Pham P.K."/>
            <person name="Cheuk R.F."/>
            <person name="Karlin-Newmann G."/>
            <person name="Liu S.X."/>
            <person name="Lam B."/>
            <person name="Sakano H."/>
            <person name="Wu T."/>
            <person name="Yu G."/>
            <person name="Miranda M."/>
            <person name="Quach H.L."/>
            <person name="Tripp M."/>
            <person name="Chang C.H."/>
            <person name="Lee J.M."/>
            <person name="Toriumi M.J."/>
            <person name="Chan M.M."/>
            <person name="Tang C.C."/>
            <person name="Onodera C.S."/>
            <person name="Deng J.M."/>
            <person name="Akiyama K."/>
            <person name="Ansari Y."/>
            <person name="Arakawa T."/>
            <person name="Banh J."/>
            <person name="Banno F."/>
            <person name="Bowser L."/>
            <person name="Brooks S.Y."/>
            <person name="Carninci P."/>
            <person name="Chao Q."/>
            <person name="Choy N."/>
            <person name="Enju A."/>
            <person name="Goldsmith A.D."/>
            <person name="Gurjal M."/>
            <person name="Hansen N.F."/>
            <person name="Hayashizaki Y."/>
            <person name="Johnson-Hopson C."/>
            <person name="Hsuan V.W."/>
            <person name="Iida K."/>
            <person name="Karnes M."/>
            <person name="Khan S."/>
            <person name="Koesema E."/>
            <person name="Ishida J."/>
            <person name="Jiang P.X."/>
            <person name="Jones T."/>
            <person name="Kawai J."/>
            <person name="Kamiya A."/>
            <person name="Meyers C."/>
            <person name="Nakajima M."/>
            <person name="Narusaka M."/>
            <person name="Seki M."/>
            <person name="Sakurai T."/>
            <person name="Satou M."/>
            <person name="Tamse R."/>
            <person name="Vaysberg M."/>
            <person name="Wallender E.K."/>
            <person name="Wong C."/>
            <person name="Yamamura Y."/>
            <person name="Yuan S."/>
            <person name="Shinozaki K."/>
            <person name="Davis R.W."/>
            <person name="Theologis A."/>
            <person name="Ecker J.R."/>
        </authorList>
    </citation>
    <scope>NUCLEOTIDE SEQUENCE [LARGE SCALE MRNA]</scope>
    <source>
        <strain>cv. Columbia</strain>
    </source>
</reference>
<reference key="4">
    <citation type="journal article" date="2014" name="Nucleic Acids Res.">
        <title>FANCM-associated proteins MHF1 and MHF2, but not the other Fanconi anemia factors, limit meiotic crossovers.</title>
        <authorList>
            <person name="Girard C."/>
            <person name="Crismani W."/>
            <person name="Froger N."/>
            <person name="Mazel J."/>
            <person name="Lemhemdi A."/>
            <person name="Horlow C."/>
            <person name="Mercier R."/>
        </authorList>
    </citation>
    <scope>FUNCTION</scope>
</reference>
<name>CENPX_ARATH</name>
<keyword id="KW-0227">DNA damage</keyword>
<keyword id="KW-0233">DNA recombination</keyword>
<keyword id="KW-0234">DNA repair</keyword>
<keyword id="KW-0238">DNA-binding</keyword>
<keyword id="KW-0539">Nucleus</keyword>
<keyword id="KW-1185">Reference proteome</keyword>
<dbReference type="EMBL" id="AC005679">
    <property type="protein sequence ID" value="AAC83046.1"/>
    <property type="status" value="ALT_SEQ"/>
    <property type="molecule type" value="Genomic_DNA"/>
</dbReference>
<dbReference type="EMBL" id="CP002684">
    <property type="protein sequence ID" value="AEE36153.1"/>
    <property type="molecule type" value="Genomic_DNA"/>
</dbReference>
<dbReference type="EMBL" id="CP002684">
    <property type="protein sequence ID" value="ANM60849.1"/>
    <property type="molecule type" value="Genomic_DNA"/>
</dbReference>
<dbReference type="EMBL" id="CP002684">
    <property type="protein sequence ID" value="ANM60850.1"/>
    <property type="molecule type" value="Genomic_DNA"/>
</dbReference>
<dbReference type="EMBL" id="AY128353">
    <property type="protein sequence ID" value="AAM91556.1"/>
    <property type="molecule type" value="mRNA"/>
</dbReference>
<dbReference type="EMBL" id="BT001158">
    <property type="protein sequence ID" value="AAN65045.1"/>
    <property type="molecule type" value="mRNA"/>
</dbReference>
<dbReference type="PIR" id="A96817">
    <property type="entry name" value="A96817"/>
</dbReference>
<dbReference type="RefSeq" id="NP_001323102.1">
    <property type="nucleotide sequence ID" value="NM_001334847.1"/>
</dbReference>
<dbReference type="RefSeq" id="NP_001323103.1">
    <property type="nucleotide sequence ID" value="NM_001334846.1"/>
</dbReference>
<dbReference type="RefSeq" id="NP_178000.2">
    <property type="nucleotide sequence ID" value="NM_106526.4"/>
</dbReference>
<dbReference type="SMR" id="Q8L7N3"/>
<dbReference type="FunCoup" id="Q8L7N3">
    <property type="interactions" value="341"/>
</dbReference>
<dbReference type="STRING" id="3702.Q8L7N3"/>
<dbReference type="PaxDb" id="3702-AT1G78790.1"/>
<dbReference type="ProteomicsDB" id="220542"/>
<dbReference type="EnsemblPlants" id="AT1G78790.1">
    <property type="protein sequence ID" value="AT1G78790.1"/>
    <property type="gene ID" value="AT1G78790"/>
</dbReference>
<dbReference type="EnsemblPlants" id="AT1G78790.3">
    <property type="protein sequence ID" value="AT1G78790.3"/>
    <property type="gene ID" value="AT1G78790"/>
</dbReference>
<dbReference type="EnsemblPlants" id="AT1G78790.4">
    <property type="protein sequence ID" value="AT1G78790.4"/>
    <property type="gene ID" value="AT1G78790"/>
</dbReference>
<dbReference type="GeneID" id="844215"/>
<dbReference type="Gramene" id="AT1G78790.1">
    <property type="protein sequence ID" value="AT1G78790.1"/>
    <property type="gene ID" value="AT1G78790"/>
</dbReference>
<dbReference type="Gramene" id="AT1G78790.3">
    <property type="protein sequence ID" value="AT1G78790.3"/>
    <property type="gene ID" value="AT1G78790"/>
</dbReference>
<dbReference type="Gramene" id="AT1G78790.4">
    <property type="protein sequence ID" value="AT1G78790.4"/>
    <property type="gene ID" value="AT1G78790"/>
</dbReference>
<dbReference type="KEGG" id="ath:AT1G78790"/>
<dbReference type="Araport" id="AT1G78790"/>
<dbReference type="TAIR" id="AT1G78790">
    <property type="gene designation" value="MHF2"/>
</dbReference>
<dbReference type="eggNOG" id="ENOG502S5FD">
    <property type="taxonomic scope" value="Eukaryota"/>
</dbReference>
<dbReference type="HOGENOM" id="CLU_154199_1_0_1"/>
<dbReference type="InParanoid" id="Q8L7N3"/>
<dbReference type="OMA" id="FRRAQME"/>
<dbReference type="PhylomeDB" id="Q8L7N3"/>
<dbReference type="PRO" id="PR:Q8L7N3"/>
<dbReference type="Proteomes" id="UP000006548">
    <property type="component" value="Chromosome 1"/>
</dbReference>
<dbReference type="ExpressionAtlas" id="Q8L7N3">
    <property type="expression patterns" value="baseline and differential"/>
</dbReference>
<dbReference type="GO" id="GO:0005634">
    <property type="term" value="C:nucleus"/>
    <property type="evidence" value="ECO:0007669"/>
    <property type="project" value="UniProtKB-SubCell"/>
</dbReference>
<dbReference type="GO" id="GO:0003677">
    <property type="term" value="F:DNA binding"/>
    <property type="evidence" value="ECO:0007669"/>
    <property type="project" value="UniProtKB-KW"/>
</dbReference>
<dbReference type="GO" id="GO:0006310">
    <property type="term" value="P:DNA recombination"/>
    <property type="evidence" value="ECO:0007669"/>
    <property type="project" value="UniProtKB-KW"/>
</dbReference>
<dbReference type="GO" id="GO:0006281">
    <property type="term" value="P:DNA repair"/>
    <property type="evidence" value="ECO:0007669"/>
    <property type="project" value="UniProtKB-KW"/>
</dbReference>
<dbReference type="GO" id="GO:0007129">
    <property type="term" value="P:homologous chromosome pairing at meiosis"/>
    <property type="evidence" value="ECO:0000316"/>
    <property type="project" value="TAIR"/>
</dbReference>
<dbReference type="GO" id="GO:0051382">
    <property type="term" value="P:kinetochore assembly"/>
    <property type="evidence" value="ECO:0007669"/>
    <property type="project" value="InterPro"/>
</dbReference>
<dbReference type="CDD" id="cd22921">
    <property type="entry name" value="HFD_CENP-X"/>
    <property type="match status" value="1"/>
</dbReference>
<dbReference type="Gene3D" id="6.10.130.30">
    <property type="match status" value="1"/>
</dbReference>
<dbReference type="InterPro" id="IPR018552">
    <property type="entry name" value="CENP-X"/>
</dbReference>
<dbReference type="PANTHER" id="PTHR28680">
    <property type="entry name" value="CENTROMERE PROTEIN X"/>
    <property type="match status" value="1"/>
</dbReference>
<dbReference type="PANTHER" id="PTHR28680:SF1">
    <property type="entry name" value="CENTROMERE PROTEIN X"/>
    <property type="match status" value="1"/>
</dbReference>
<dbReference type="Pfam" id="PF09415">
    <property type="entry name" value="CENP-X"/>
    <property type="match status" value="1"/>
</dbReference>
<organism>
    <name type="scientific">Arabidopsis thaliana</name>
    <name type="common">Mouse-ear cress</name>
    <dbReference type="NCBI Taxonomy" id="3702"/>
    <lineage>
        <taxon>Eukaryota</taxon>
        <taxon>Viridiplantae</taxon>
        <taxon>Streptophyta</taxon>
        <taxon>Embryophyta</taxon>
        <taxon>Tracheophyta</taxon>
        <taxon>Spermatophyta</taxon>
        <taxon>Magnoliopsida</taxon>
        <taxon>eudicotyledons</taxon>
        <taxon>Gunneridae</taxon>
        <taxon>Pentapetalae</taxon>
        <taxon>rosids</taxon>
        <taxon>malvids</taxon>
        <taxon>Brassicales</taxon>
        <taxon>Brassicaceae</taxon>
        <taxon>Camelineae</taxon>
        <taxon>Arabidopsis</taxon>
    </lineage>
</organism>
<gene>
    <name evidence="2" type="primary">MHF2</name>
    <name evidence="5" type="ordered locus">At1g78790</name>
    <name evidence="6" type="ORF">F9K20.17</name>
</gene>
<protein>
    <recommendedName>
        <fullName evidence="2">Protein MHF2 homolog</fullName>
        <shortName evidence="2">AtMHF2</shortName>
    </recommendedName>
</protein>
<feature type="chain" id="PRO_0000440039" description="Protein MHF2 homolog">
    <location>
        <begin position="1"/>
        <end position="104"/>
    </location>
</feature>
<accession>Q8L7N3</accession>
<accession>Q9ZV97</accession>
<evidence type="ECO:0000269" key="1">
    <source>
    </source>
</evidence>
<evidence type="ECO:0000303" key="2">
    <source>
    </source>
</evidence>
<evidence type="ECO:0000305" key="3"/>
<evidence type="ECO:0000305" key="4">
    <source>
    </source>
</evidence>
<evidence type="ECO:0000312" key="5">
    <source>
        <dbReference type="Araport" id="AT1G78790"/>
    </source>
</evidence>
<evidence type="ECO:0000312" key="6">
    <source>
        <dbReference type="EMBL" id="AEE36153.1"/>
    </source>
</evidence>
<comment type="function">
    <text evidence="1">Acts in the same pathway as FANCM to restrain class II meiotic crossing over (CO), and acts with FANCM during meiosis to repair interstrand cross-links (ICLs).</text>
</comment>
<comment type="subcellular location">
    <subcellularLocation>
        <location evidence="4">Nucleus</location>
    </subcellularLocation>
</comment>
<comment type="similarity">
    <text evidence="3">Belongs to the CENP-X/MHF2 family.</text>
</comment>
<comment type="sequence caution" evidence="3">
    <conflict type="erroneous gene model prediction">
        <sequence resource="EMBL-CDS" id="AAC83046"/>
    </conflict>
</comment>